<accession>A1SK16</accession>
<dbReference type="EC" id="6.3.1.19" evidence="1"/>
<dbReference type="EMBL" id="CP000509">
    <property type="protein sequence ID" value="ABL82151.1"/>
    <property type="molecule type" value="Genomic_DNA"/>
</dbReference>
<dbReference type="RefSeq" id="WP_011756091.1">
    <property type="nucleotide sequence ID" value="NC_008699.1"/>
</dbReference>
<dbReference type="SMR" id="A1SK16"/>
<dbReference type="STRING" id="196162.Noca_2648"/>
<dbReference type="MEROPS" id="U72.001"/>
<dbReference type="KEGG" id="nca:Noca_2648"/>
<dbReference type="eggNOG" id="COG0638">
    <property type="taxonomic scope" value="Bacteria"/>
</dbReference>
<dbReference type="HOGENOM" id="CLU_040524_0_1_11"/>
<dbReference type="OrthoDB" id="9760627at2"/>
<dbReference type="UniPathway" id="UPA00997"/>
<dbReference type="UniPathway" id="UPA00998"/>
<dbReference type="Proteomes" id="UP000000640">
    <property type="component" value="Chromosome"/>
</dbReference>
<dbReference type="GO" id="GO:0005524">
    <property type="term" value="F:ATP binding"/>
    <property type="evidence" value="ECO:0007669"/>
    <property type="project" value="UniProtKB-UniRule"/>
</dbReference>
<dbReference type="GO" id="GO:0016879">
    <property type="term" value="F:ligase activity, forming carbon-nitrogen bonds"/>
    <property type="evidence" value="ECO:0007669"/>
    <property type="project" value="InterPro"/>
</dbReference>
<dbReference type="GO" id="GO:0000287">
    <property type="term" value="F:magnesium ion binding"/>
    <property type="evidence" value="ECO:0007669"/>
    <property type="project" value="UniProtKB-UniRule"/>
</dbReference>
<dbReference type="GO" id="GO:0019787">
    <property type="term" value="F:ubiquitin-like protein transferase activity"/>
    <property type="evidence" value="ECO:0007669"/>
    <property type="project" value="UniProtKB-UniRule"/>
</dbReference>
<dbReference type="GO" id="GO:0019941">
    <property type="term" value="P:modification-dependent protein catabolic process"/>
    <property type="evidence" value="ECO:0007669"/>
    <property type="project" value="UniProtKB-UniRule"/>
</dbReference>
<dbReference type="GO" id="GO:0010498">
    <property type="term" value="P:proteasomal protein catabolic process"/>
    <property type="evidence" value="ECO:0007669"/>
    <property type="project" value="UniProtKB-UniRule"/>
</dbReference>
<dbReference type="GO" id="GO:0070490">
    <property type="term" value="P:protein pupylation"/>
    <property type="evidence" value="ECO:0007669"/>
    <property type="project" value="UniProtKB-UniRule"/>
</dbReference>
<dbReference type="HAMAP" id="MF_02111">
    <property type="entry name" value="Pup_ligase"/>
    <property type="match status" value="1"/>
</dbReference>
<dbReference type="InterPro" id="IPR022279">
    <property type="entry name" value="Pup_ligase"/>
</dbReference>
<dbReference type="InterPro" id="IPR004347">
    <property type="entry name" value="Pup_ligase/deamidase"/>
</dbReference>
<dbReference type="NCBIfam" id="TIGR03686">
    <property type="entry name" value="pupylate_PafA"/>
    <property type="match status" value="1"/>
</dbReference>
<dbReference type="PANTHER" id="PTHR42307">
    <property type="entry name" value="PUP DEAMIDASE/DEPUPYLASE"/>
    <property type="match status" value="1"/>
</dbReference>
<dbReference type="PANTHER" id="PTHR42307:SF3">
    <property type="entry name" value="PUP--PROTEIN LIGASE"/>
    <property type="match status" value="1"/>
</dbReference>
<dbReference type="Pfam" id="PF03136">
    <property type="entry name" value="Pup_ligase"/>
    <property type="match status" value="1"/>
</dbReference>
<dbReference type="PIRSF" id="PIRSF018077">
    <property type="entry name" value="UCP018077"/>
    <property type="match status" value="1"/>
</dbReference>
<reference key="1">
    <citation type="submission" date="2006-12" db="EMBL/GenBank/DDBJ databases">
        <title>Complete sequence of chromosome 1 of Nocardioides sp. JS614.</title>
        <authorList>
            <person name="Copeland A."/>
            <person name="Lucas S."/>
            <person name="Lapidus A."/>
            <person name="Barry K."/>
            <person name="Detter J.C."/>
            <person name="Glavina del Rio T."/>
            <person name="Hammon N."/>
            <person name="Israni S."/>
            <person name="Dalin E."/>
            <person name="Tice H."/>
            <person name="Pitluck S."/>
            <person name="Thompson L.S."/>
            <person name="Brettin T."/>
            <person name="Bruce D."/>
            <person name="Han C."/>
            <person name="Tapia R."/>
            <person name="Schmutz J."/>
            <person name="Larimer F."/>
            <person name="Land M."/>
            <person name="Hauser L."/>
            <person name="Kyrpides N."/>
            <person name="Kim E."/>
            <person name="Mattes T."/>
            <person name="Gossett J."/>
            <person name="Richardson P."/>
        </authorList>
    </citation>
    <scope>NUCLEOTIDE SEQUENCE [LARGE SCALE GENOMIC DNA]</scope>
    <source>
        <strain>ATCC BAA-499 / JS614</strain>
    </source>
</reference>
<protein>
    <recommendedName>
        <fullName evidence="1">Pup--protein ligase</fullName>
        <ecNumber evidence="1">6.3.1.19</ecNumber>
    </recommendedName>
    <alternativeName>
        <fullName evidence="1">Proteasome accessory factor A</fullName>
    </alternativeName>
    <alternativeName>
        <fullName evidence="1">Pup-conjugating enzyme</fullName>
    </alternativeName>
</protein>
<gene>
    <name evidence="1" type="primary">pafA</name>
    <name type="ordered locus">Noca_2648</name>
</gene>
<comment type="function">
    <text evidence="1">Catalyzes the covalent attachment of the prokaryotic ubiquitin-like protein modifier Pup to the proteasomal substrate proteins, thereby targeting them for proteasomal degradation. This tagging system is termed pupylation. The ligation reaction involves the side-chain carboxylate of the C-terminal glutamate of Pup and the side-chain amino group of a substrate lysine.</text>
</comment>
<comment type="catalytic activity">
    <reaction evidence="1">
        <text>ATP + [prokaryotic ubiquitin-like protein]-L-glutamate + [protein]-L-lysine = ADP + phosphate + N(6)-([prokaryotic ubiquitin-like protein]-gamma-L-glutamyl)-[protein]-L-lysine.</text>
        <dbReference type="EC" id="6.3.1.19"/>
    </reaction>
</comment>
<comment type="pathway">
    <text evidence="1">Protein degradation; proteasomal Pup-dependent pathway.</text>
</comment>
<comment type="pathway">
    <text evidence="1">Protein modification; protein pupylation.</text>
</comment>
<comment type="miscellaneous">
    <text evidence="1">The reaction mechanism probably proceeds via the activation of Pup by phosphorylation of its C-terminal glutamate, which is then subject to nucleophilic attack by the substrate lysine, resulting in an isopeptide bond and the release of phosphate as a good leaving group.</text>
</comment>
<comment type="similarity">
    <text evidence="1">Belongs to the Pup ligase/Pup deamidase family. Pup-conjugating enzyme subfamily.</text>
</comment>
<evidence type="ECO:0000255" key="1">
    <source>
        <dbReference type="HAMAP-Rule" id="MF_02111"/>
    </source>
</evidence>
<name>PAFA_NOCSJ</name>
<proteinExistence type="inferred from homology"/>
<sequence length="453" mass="51939">MDRRIFGIENEYGVTCTFKGQRRLSPDEVARYLFRKVVSWGRSSNVFLRNGARLYLDVGSHPEYATPECDDVVELVTHDKAGERVLEGLLLDAEQRLHDEGIAGEIYLFKNNTDSAGNSYGCHENYLVSRAGEFSRLADVLIPFLVTRQIIVGAGKITQTPRGASYSVSQRAEHIWEGVSSATTRSRPIINTRDEPHADAEKYRRLHVIVGDSNMSETTTMLKVASCDLVLRMIEEGVVMRDLTMENPIRAIREISHDVTGRRKVRLANGREASALDIQQEYLTKARDFVDRRELSTPLIEQALDLWERGLKAVEADDLGLVDREIDWVIKWKLIERYRAKHGLPLGHPRIAQLDLAYHDIHRGRGLYYLLEKRGAVARVTTDLKIFEAKSVPPQTTRARLRGEFIRRAQERRRDFTVDWVHLKLNDQAQRTVLCKDPFRAHDERVQRLIDGM</sequence>
<keyword id="KW-0067">ATP-binding</keyword>
<keyword id="KW-0436">Ligase</keyword>
<keyword id="KW-0460">Magnesium</keyword>
<keyword id="KW-0479">Metal-binding</keyword>
<keyword id="KW-0547">Nucleotide-binding</keyword>
<keyword id="KW-1185">Reference proteome</keyword>
<keyword id="KW-0833">Ubl conjugation pathway</keyword>
<organism>
    <name type="scientific">Nocardioides sp. (strain ATCC BAA-499 / JS614)</name>
    <dbReference type="NCBI Taxonomy" id="196162"/>
    <lineage>
        <taxon>Bacteria</taxon>
        <taxon>Bacillati</taxon>
        <taxon>Actinomycetota</taxon>
        <taxon>Actinomycetes</taxon>
        <taxon>Propionibacteriales</taxon>
        <taxon>Nocardioidaceae</taxon>
        <taxon>Nocardioides</taxon>
    </lineage>
</organism>
<feature type="chain" id="PRO_0000395942" description="Pup--protein ligase">
    <location>
        <begin position="1"/>
        <end position="453"/>
    </location>
</feature>
<feature type="active site" description="Proton acceptor" evidence="1">
    <location>
        <position position="57"/>
    </location>
</feature>
<feature type="binding site" evidence="1">
    <location>
        <position position="9"/>
    </location>
    <ligand>
        <name>Mg(2+)</name>
        <dbReference type="ChEBI" id="CHEBI:18420"/>
    </ligand>
</feature>
<feature type="binding site" evidence="1">
    <location>
        <position position="53"/>
    </location>
    <ligand>
        <name>ATP</name>
        <dbReference type="ChEBI" id="CHEBI:30616"/>
    </ligand>
</feature>
<feature type="binding site" evidence="1">
    <location>
        <position position="55"/>
    </location>
    <ligand>
        <name>Mg(2+)</name>
        <dbReference type="ChEBI" id="CHEBI:18420"/>
    </ligand>
</feature>
<feature type="binding site" evidence="1">
    <location>
        <position position="63"/>
    </location>
    <ligand>
        <name>Mg(2+)</name>
        <dbReference type="ChEBI" id="CHEBI:18420"/>
    </ligand>
</feature>
<feature type="binding site" evidence="1">
    <location>
        <position position="66"/>
    </location>
    <ligand>
        <name>ATP</name>
        <dbReference type="ChEBI" id="CHEBI:30616"/>
    </ligand>
</feature>
<feature type="binding site" evidence="1">
    <location>
        <position position="420"/>
    </location>
    <ligand>
        <name>ATP</name>
        <dbReference type="ChEBI" id="CHEBI:30616"/>
    </ligand>
</feature>